<reference key="1">
    <citation type="journal article" date="2005" name="Genetics">
        <title>Sequence finishing and gene mapping for Candida albicans chromosome 7 and syntenic analysis against the Saccharomyces cerevisiae genome.</title>
        <authorList>
            <person name="Chibana H."/>
            <person name="Oka N."/>
            <person name="Nakayama H."/>
            <person name="Aoyama T."/>
            <person name="Magee B.B."/>
            <person name="Magee P.T."/>
            <person name="Mikami Y."/>
        </authorList>
    </citation>
    <scope>NUCLEOTIDE SEQUENCE [LARGE SCALE GENOMIC DNA]</scope>
    <source>
        <strain>SC5314 / ATCC MYA-2876</strain>
    </source>
</reference>
<reference key="2">
    <citation type="journal article" date="2004" name="Proc. Natl. Acad. Sci. U.S.A.">
        <title>The diploid genome sequence of Candida albicans.</title>
        <authorList>
            <person name="Jones T."/>
            <person name="Federspiel N.A."/>
            <person name="Chibana H."/>
            <person name="Dungan J."/>
            <person name="Kalman S."/>
            <person name="Magee B.B."/>
            <person name="Newport G."/>
            <person name="Thorstenson Y.R."/>
            <person name="Agabian N."/>
            <person name="Magee P.T."/>
            <person name="Davis R.W."/>
            <person name="Scherer S."/>
        </authorList>
    </citation>
    <scope>NUCLEOTIDE SEQUENCE [LARGE SCALE GENOMIC DNA]</scope>
    <source>
        <strain>SC5314 / ATCC MYA-2876</strain>
    </source>
</reference>
<reference key="3">
    <citation type="journal article" date="2007" name="Genome Biol.">
        <title>Assembly of the Candida albicans genome into sixteen supercontigs aligned on the eight chromosomes.</title>
        <authorList>
            <person name="van het Hoog M."/>
            <person name="Rast T.J."/>
            <person name="Martchenko M."/>
            <person name="Grindle S."/>
            <person name="Dignard D."/>
            <person name="Hogues H."/>
            <person name="Cuomo C."/>
            <person name="Berriman M."/>
            <person name="Scherer S."/>
            <person name="Magee B.B."/>
            <person name="Whiteway M."/>
            <person name="Chibana H."/>
            <person name="Nantel A."/>
            <person name="Magee P.T."/>
        </authorList>
    </citation>
    <scope>GENOME REANNOTATION</scope>
    <source>
        <strain>SC5314 / ATCC MYA-2876</strain>
    </source>
</reference>
<reference key="4">
    <citation type="journal article" date="2013" name="Genome Biol.">
        <title>Assembly of a phased diploid Candida albicans genome facilitates allele-specific measurements and provides a simple model for repeat and indel structure.</title>
        <authorList>
            <person name="Muzzey D."/>
            <person name="Schwartz K."/>
            <person name="Weissman J.S."/>
            <person name="Sherlock G."/>
        </authorList>
    </citation>
    <scope>NUCLEOTIDE SEQUENCE [LARGE SCALE GENOMIC DNA]</scope>
    <scope>GENOME REANNOTATION</scope>
    <source>
        <strain>SC5314 / ATCC MYA-2876</strain>
    </source>
</reference>
<gene>
    <name type="primary">SIN4</name>
    <name type="synonym">MED16</name>
    <name type="ordered locus">CAALFM_C703320CA</name>
    <name type="ORF">CaJ7.0384</name>
    <name type="ORF">CaO19.1343</name>
    <name type="ORF">CaO19.8923</name>
</gene>
<dbReference type="EMBL" id="AP006852">
    <property type="protein sequence ID" value="BAE44838.1"/>
    <property type="molecule type" value="Genomic_DNA"/>
</dbReference>
<dbReference type="EMBL" id="CP017629">
    <property type="protein sequence ID" value="AOW30676.1"/>
    <property type="molecule type" value="Genomic_DNA"/>
</dbReference>
<dbReference type="RefSeq" id="XP_711683.2">
    <property type="nucleotide sequence ID" value="XM_706591.2"/>
</dbReference>
<dbReference type="SMR" id="Q59PP6"/>
<dbReference type="BioGRID" id="1229818">
    <property type="interactions" value="2"/>
</dbReference>
<dbReference type="FunCoup" id="Q59PP6">
    <property type="interactions" value="288"/>
</dbReference>
<dbReference type="STRING" id="237561.Q59PP6"/>
<dbReference type="PeptideAtlas" id="Q59PP6"/>
<dbReference type="GeneID" id="3646725"/>
<dbReference type="KEGG" id="cal:CAALFM_C703320CA"/>
<dbReference type="eggNOG" id="ENOG502QWAC">
    <property type="taxonomic scope" value="Eukaryota"/>
</dbReference>
<dbReference type="HOGENOM" id="CLU_013428_0_0_1"/>
<dbReference type="InParanoid" id="Q59PP6"/>
<dbReference type="OrthoDB" id="4139168at2759"/>
<dbReference type="Proteomes" id="UP000000559">
    <property type="component" value="Chromosome 7"/>
</dbReference>
<dbReference type="GO" id="GO:0016592">
    <property type="term" value="C:mediator complex"/>
    <property type="evidence" value="ECO:0000318"/>
    <property type="project" value="GO_Central"/>
</dbReference>
<dbReference type="GO" id="GO:0045893">
    <property type="term" value="P:positive regulation of DNA-templated transcription"/>
    <property type="evidence" value="ECO:0000318"/>
    <property type="project" value="GO_Central"/>
</dbReference>
<dbReference type="InterPro" id="IPR048338">
    <property type="entry name" value="Mediator_Med16"/>
</dbReference>
<dbReference type="InterPro" id="IPR048339">
    <property type="entry name" value="Mediator_Med16_C"/>
</dbReference>
<dbReference type="InterPro" id="IPR021665">
    <property type="entry name" value="Mediator_Med16_N"/>
</dbReference>
<dbReference type="PANTHER" id="PTHR13224:SF6">
    <property type="entry name" value="MEDIATOR OF RNA POLYMERASE II TRANSCRIPTION SUBUNIT 16"/>
    <property type="match status" value="1"/>
</dbReference>
<dbReference type="PANTHER" id="PTHR13224">
    <property type="entry name" value="THYROID HORMONE RECEPTOR-ASSOCIATED PROTEIN-RELATED"/>
    <property type="match status" value="1"/>
</dbReference>
<dbReference type="Pfam" id="PF20719">
    <property type="entry name" value="Med16_C"/>
    <property type="match status" value="1"/>
</dbReference>
<dbReference type="Pfam" id="PF11635">
    <property type="entry name" value="Med16_N"/>
    <property type="match status" value="1"/>
</dbReference>
<proteinExistence type="inferred from homology"/>
<keyword id="KW-0010">Activator</keyword>
<keyword id="KW-0539">Nucleus</keyword>
<keyword id="KW-1185">Reference proteome</keyword>
<keyword id="KW-0804">Transcription</keyword>
<keyword id="KW-0805">Transcription regulation</keyword>
<evidence type="ECO:0000250" key="1"/>
<evidence type="ECO:0000256" key="2">
    <source>
        <dbReference type="SAM" id="MobiDB-lite"/>
    </source>
</evidence>
<evidence type="ECO:0000305" key="3"/>
<name>MED16_CANAL</name>
<feature type="chain" id="PRO_0000307626" description="Mediator of RNA polymerase II transcription subunit 16">
    <location>
        <begin position="1"/>
        <end position="1053"/>
    </location>
</feature>
<feature type="region of interest" description="Disordered" evidence="2">
    <location>
        <begin position="139"/>
        <end position="170"/>
    </location>
</feature>
<feature type="compositionally biased region" description="Basic and acidic residues" evidence="2">
    <location>
        <begin position="142"/>
        <end position="151"/>
    </location>
</feature>
<feature type="sequence conflict" description="In Ref. 1; BAE44838." evidence="3" ref="1">
    <location>
        <position position="52"/>
    </location>
</feature>
<feature type="sequence conflict" description="In Ref. 1; BAE44838." evidence="3" ref="1">
    <original>V</original>
    <variation>S</variation>
    <location>
        <position position="194"/>
    </location>
</feature>
<feature type="sequence conflict" description="In Ref. 1; BAE44838." evidence="3" ref="1">
    <original>S</original>
    <variation>F</variation>
    <location>
        <position position="495"/>
    </location>
</feature>
<feature type="sequence conflict" description="In Ref. 1; BAE44838." evidence="3" ref="1">
    <original>K</original>
    <variation>W</variation>
    <location>
        <position position="512"/>
    </location>
</feature>
<sequence>MATQTDKQTIGRHLEQVPKASNLISWSRNGFIAYIPPIITTTTTTPTTTTTTNNNKSNLLLTYIKNSDGKKWQLASPEPINIKLENNFLPQLSLVSWGSLNTDLAVSDIYGNFYILLAGVGLLDPNHIPSTITTTSTIKTEGNTEKNKDTKQIGNGSGTNGHGDSPINTPSFELTSYNHMEMIYRDIINPDINVAVNPGASIVAFKWLNIEKPQIVNKAATRLAENPTTTSSNSSSSIYGYGINQYQPYGVCHPIPTKQACVALRKNGQFILFYQGEHKVEYHKICCNLTDNISIIEKASIGFNNDKQIIVTAWDSLSNDINVYSIDINWGFLVESAKRQKLDQHYHTPKEAQKPPRLTLKKLHQMKPIQCFKEEDGESQSQSVVPEMGKLKVEELSSIDIISSNPDPKSGLSILITYGSSIIYRYALEKSDSSNTTSGGETSKNPISQAFYNLGVEKKIDWKGDDSSVRLVFKDKLMRRGQIESIINGFLDLSSLIIYKDGTVDVVDTTSKQIVNNSKNNNSVTGDEMELDNNDYPPKLISNLFDQGFQFPKISHKNRLVLAISPTMSSIVYTEIYGETVNLQLKPLERIDNFGTNSHDLYYTSVAFAHRYAFALYTSTCSDDLLLLIQSEINRIKDAVDGDTITRNKLGKQLCDSVIIECHKAINFHLDTITKESLDKLLSNNASLQKLLSLQLILGEFQQSSHFPNNYVVPDIAWIVLNLRSASLGIMFTLSSIYRQVSKKKPSEDTLQDSITRGECIMSIIGNFKWLIDLLVYLNQELLQLIYVKNNFLNNGNTTTSKLTLSNSIVLPLILNKVSRLFLMYAISAMGRTHEILKKLHKDLTEANKLFAPMKESLNRYFSISNNSPITVNLFESYLRECDALLNKEVPQKILTANNSINGNVNGNSGTSTNKPYSALKFEQKLLIKGIDVNDDNDSSTKISNTIIEELSNMILDRYSISISRETKLSELMFYDTDWLNIGINKKEVPSYTIDALRKLIISDSSTSTSLAKGEKLRVCTRCRAVSLVGDVTGLWTMVFQRTCMCGNAWVNV</sequence>
<accession>Q59PP6</accession>
<accession>A0A1D8PRC3</accession>
<accession>Q3MP22</accession>
<accession>Q59PM8</accession>
<organism>
    <name type="scientific">Candida albicans (strain SC5314 / ATCC MYA-2876)</name>
    <name type="common">Yeast</name>
    <dbReference type="NCBI Taxonomy" id="237561"/>
    <lineage>
        <taxon>Eukaryota</taxon>
        <taxon>Fungi</taxon>
        <taxon>Dikarya</taxon>
        <taxon>Ascomycota</taxon>
        <taxon>Saccharomycotina</taxon>
        <taxon>Pichiomycetes</taxon>
        <taxon>Debaryomycetaceae</taxon>
        <taxon>Candida/Lodderomyces clade</taxon>
        <taxon>Candida</taxon>
    </lineage>
</organism>
<comment type="function">
    <text evidence="1">Component of the Mediator complex, a coactivator involved in the regulated transcription of nearly all RNA polymerase II-dependent genes. Mediator functions as a bridge to convey information from gene-specific regulatory proteins to the basal RNA polymerase II transcription machinery. Mediator is recruited to promoters by direct interactions with regulatory proteins and serves as a scaffold for the assembly of a functional preinitiation complex with RNA polymerase II and the general transcription factors (By similarity).</text>
</comment>
<comment type="subunit">
    <text evidence="1">Component of the Mediator complex.</text>
</comment>
<comment type="subcellular location">
    <subcellularLocation>
        <location evidence="3">Nucleus</location>
    </subcellularLocation>
</comment>
<comment type="similarity">
    <text evidence="3">Belongs to the Mediator complex subunit 16 family.</text>
</comment>
<protein>
    <recommendedName>
        <fullName>Mediator of RNA polymerase II transcription subunit 16</fullName>
    </recommendedName>
    <alternativeName>
        <fullName>Mediator complex subunit 16</fullName>
    </alternativeName>
</protein>